<proteinExistence type="evidence at transcript level"/>
<dbReference type="EMBL" id="AB169791">
    <property type="protein sequence ID" value="BAE01872.1"/>
    <property type="molecule type" value="mRNA"/>
</dbReference>
<dbReference type="RefSeq" id="NP_001274639.1">
    <property type="nucleotide sequence ID" value="NM_001287710.1"/>
</dbReference>
<dbReference type="RefSeq" id="XP_045230718.1">
    <property type="nucleotide sequence ID" value="XM_045374783.2"/>
</dbReference>
<dbReference type="SMR" id="Q4R4V3"/>
<dbReference type="STRING" id="9541.ENSMFAP00000040185"/>
<dbReference type="GeneID" id="102143196"/>
<dbReference type="VEuPathDB" id="HostDB:ENSMFAG00000046232"/>
<dbReference type="eggNOG" id="KOG4470">
    <property type="taxonomic scope" value="Eukaryota"/>
</dbReference>
<dbReference type="OMA" id="PMFNERN"/>
<dbReference type="Proteomes" id="UP000233100">
    <property type="component" value="Chromosome 16"/>
</dbReference>
<dbReference type="GO" id="GO:0005737">
    <property type="term" value="C:cytoplasm"/>
    <property type="evidence" value="ECO:0007669"/>
    <property type="project" value="UniProtKB-SubCell"/>
</dbReference>
<dbReference type="GO" id="GO:0005654">
    <property type="term" value="C:nucleoplasm"/>
    <property type="evidence" value="ECO:0007669"/>
    <property type="project" value="TreeGrafter"/>
</dbReference>
<dbReference type="GO" id="GO:0008537">
    <property type="term" value="C:proteasome activator complex"/>
    <property type="evidence" value="ECO:0007669"/>
    <property type="project" value="InterPro"/>
</dbReference>
<dbReference type="GO" id="GO:0061133">
    <property type="term" value="F:endopeptidase activator activity"/>
    <property type="evidence" value="ECO:0007669"/>
    <property type="project" value="TreeGrafter"/>
</dbReference>
<dbReference type="GO" id="GO:0097371">
    <property type="term" value="F:MDM2/MDM4 family protein binding"/>
    <property type="evidence" value="ECO:0000250"/>
    <property type="project" value="UniProtKB"/>
</dbReference>
<dbReference type="GO" id="GO:0002039">
    <property type="term" value="F:p53 binding"/>
    <property type="evidence" value="ECO:0000250"/>
    <property type="project" value="UniProtKB"/>
</dbReference>
<dbReference type="GO" id="GO:0006915">
    <property type="term" value="P:apoptotic process"/>
    <property type="evidence" value="ECO:0007669"/>
    <property type="project" value="UniProtKB-KW"/>
</dbReference>
<dbReference type="GO" id="GO:2001237">
    <property type="term" value="P:negative regulation of extrinsic apoptotic signaling pathway"/>
    <property type="evidence" value="ECO:0000250"/>
    <property type="project" value="UniProtKB"/>
</dbReference>
<dbReference type="GO" id="GO:2000045">
    <property type="term" value="P:regulation of G1/S transition of mitotic cell cycle"/>
    <property type="evidence" value="ECO:0007669"/>
    <property type="project" value="TreeGrafter"/>
</dbReference>
<dbReference type="GO" id="GO:0061136">
    <property type="term" value="P:regulation of proteasomal protein catabolic process"/>
    <property type="evidence" value="ECO:0007669"/>
    <property type="project" value="TreeGrafter"/>
</dbReference>
<dbReference type="FunFam" id="1.20.120.180:FF:000001">
    <property type="entry name" value="Proteasome activator complex subunit 3"/>
    <property type="match status" value="1"/>
</dbReference>
<dbReference type="FunFam" id="1.20.5.120:FF:000001">
    <property type="entry name" value="Proteasome activator complex subunit 3"/>
    <property type="match status" value="1"/>
</dbReference>
<dbReference type="Gene3D" id="1.20.120.180">
    <property type="entry name" value="Proteasome activator pa28, C-terminal domain"/>
    <property type="match status" value="1"/>
</dbReference>
<dbReference type="Gene3D" id="1.20.5.120">
    <property type="entry name" value="Proteasome activator pa28, N-terminal domain"/>
    <property type="match status" value="1"/>
</dbReference>
<dbReference type="InterPro" id="IPR003186">
    <property type="entry name" value="PA28_C"/>
</dbReference>
<dbReference type="InterPro" id="IPR036997">
    <property type="entry name" value="PA28_C_sf"/>
</dbReference>
<dbReference type="InterPro" id="IPR036996">
    <property type="entry name" value="PA28_N_sf"/>
</dbReference>
<dbReference type="InterPro" id="IPR009077">
    <property type="entry name" value="Proteasome_activ_PA28"/>
</dbReference>
<dbReference type="InterPro" id="IPR003185">
    <property type="entry name" value="Proteasome_activ_PA28_N"/>
</dbReference>
<dbReference type="InterPro" id="IPR036252">
    <property type="entry name" value="Proteasome_activ_sf"/>
</dbReference>
<dbReference type="PANTHER" id="PTHR10660:SF4">
    <property type="entry name" value="PROTEASOME ACTIVATOR COMPLEX SUBUNIT 3"/>
    <property type="match status" value="1"/>
</dbReference>
<dbReference type="PANTHER" id="PTHR10660">
    <property type="entry name" value="PROTEASOME REGULATOR PA28"/>
    <property type="match status" value="1"/>
</dbReference>
<dbReference type="Pfam" id="PF02252">
    <property type="entry name" value="PA28_C"/>
    <property type="match status" value="1"/>
</dbReference>
<dbReference type="Pfam" id="PF02251">
    <property type="entry name" value="PA28_N"/>
    <property type="match status" value="1"/>
</dbReference>
<dbReference type="SUPFAM" id="SSF47216">
    <property type="entry name" value="Proteasome activator"/>
    <property type="match status" value="1"/>
</dbReference>
<gene>
    <name type="primary">PSME3</name>
    <name type="ORF">QccE-11365</name>
</gene>
<sequence>MASLLKVDQEVKLKVDSFRERITSEAEDLVANFFPKKLLELDSFLKEPILNIHDLTQIHSDMNLPVPDPILLTNSHDGLDGPTYKKRRLDECEEAFQGTKVFVMPNGMLKSNQQLVDIIEKVKPEIRLLIEKCNTVKMWVQLLIPRIEDGNNFGVSIQEETVAELRTVESEAASYLDQISRYYITRAKLVSKIAKYPHVEDYRRTVTEIDEKEYISLRLIISELRNQYVTLHDMILKNIEKIKRPRSSNAETLY</sequence>
<reference key="1">
    <citation type="submission" date="2005-06" db="EMBL/GenBank/DDBJ databases">
        <title>DNA sequences of macaque genes expressed in brain or testis and its evolutionary implications.</title>
        <authorList>
            <consortium name="International consortium for macaque cDNA sequencing and analysis"/>
        </authorList>
    </citation>
    <scope>NUCLEOTIDE SEQUENCE [LARGE SCALE MRNA]</scope>
    <source>
        <tissue>Brain cortex</tissue>
    </source>
</reference>
<organism>
    <name type="scientific">Macaca fascicularis</name>
    <name type="common">Crab-eating macaque</name>
    <name type="synonym">Cynomolgus monkey</name>
    <dbReference type="NCBI Taxonomy" id="9541"/>
    <lineage>
        <taxon>Eukaryota</taxon>
        <taxon>Metazoa</taxon>
        <taxon>Chordata</taxon>
        <taxon>Craniata</taxon>
        <taxon>Vertebrata</taxon>
        <taxon>Euteleostomi</taxon>
        <taxon>Mammalia</taxon>
        <taxon>Eutheria</taxon>
        <taxon>Euarchontoglires</taxon>
        <taxon>Primates</taxon>
        <taxon>Haplorrhini</taxon>
        <taxon>Catarrhini</taxon>
        <taxon>Cercopithecidae</taxon>
        <taxon>Cercopithecinae</taxon>
        <taxon>Macaca</taxon>
    </lineage>
</organism>
<accession>Q4R4V3</accession>
<protein>
    <recommendedName>
        <fullName>Proteasome activator complex subunit 3</fullName>
    </recommendedName>
    <alternativeName>
        <fullName>Activator of multicatalytic protease subunit 3</fullName>
    </alternativeName>
    <alternativeName>
        <fullName>Proteasome activator 28 subunit gamma</fullName>
        <shortName>PA28g</shortName>
        <shortName>PA28gamma</shortName>
    </alternativeName>
</protein>
<name>PSME3_MACFA</name>
<feature type="initiator methionine" description="Removed" evidence="2">
    <location>
        <position position="1"/>
    </location>
</feature>
<feature type="chain" id="PRO_0000223497" description="Proteasome activator complex subunit 3">
    <location>
        <begin position="2"/>
        <end position="254"/>
    </location>
</feature>
<feature type="modified residue" description="N-acetylalanine" evidence="2">
    <location>
        <position position="2"/>
    </location>
</feature>
<feature type="modified residue" description="Phosphoserine" evidence="2">
    <location>
        <position position="17"/>
    </location>
</feature>
<feature type="modified residue" description="Phosphoserine" evidence="2">
    <location>
        <position position="24"/>
    </location>
</feature>
<feature type="modified residue" description="N6-acetyllysine; by P300/CBP" evidence="2">
    <location>
        <position position="195"/>
    </location>
</feature>
<feature type="modified residue" description="Phosphoserine; by CHEK2" evidence="2">
    <location>
        <position position="247"/>
    </location>
</feature>
<keyword id="KW-0007">Acetylation</keyword>
<keyword id="KW-0053">Apoptosis</keyword>
<keyword id="KW-0131">Cell cycle</keyword>
<keyword id="KW-0963">Cytoplasm</keyword>
<keyword id="KW-0539">Nucleus</keyword>
<keyword id="KW-0597">Phosphoprotein</keyword>
<keyword id="KW-0647">Proteasome</keyword>
<keyword id="KW-1185">Reference proteome</keyword>
<comment type="function">
    <text evidence="2">Subunit of the 11S REG-gamma (also called PA28-gamma) proteasome regulator, a doughnut-shaped homoheptamer which associates with the proteasome. 11S REG-gamma activates the trypsin-like catalytic subunit of the proteasome but inhibits the chymotrypsin-like and postglutamyl-preferring (PGPH) subunits. Facilitates the MDM2-p53/TP53 interaction which promotes ubiquitination- and MDM2-dependent proteasomal degradation of p53/TP53, limiting its accumulation and resulting in inhibited apoptosis after DNA damage. May also be involved in cell cycle regulation. Mediates CCAR2 and CHEK2-dependent SIRT1 inhibition (By similarity).</text>
</comment>
<comment type="subunit">
    <text evidence="2 3">Homoheptamer; the stability of the heptamer is essential for the specific activation of the trypsine-like subunit and inhibition of the chymotrypsin-like and postglutamyl-preferring (PGPH) subunits of the proteasome. Interacts with p53/TP53, MDM2 and MAP3K3. Associates with the proteasome. Interacts with CCAR2. Interacts with PSME3IP1 (via C-terminus); the interaction is direct and promotes the association of PSME3 with the 20S proteasome. Interacts with COIL; the interaction is inhibited by PSME3IP1.</text>
</comment>
<comment type="subcellular location">
    <subcellularLocation>
        <location evidence="1">Nucleus</location>
    </subcellularLocation>
    <subcellularLocation>
        <location evidence="1">Cytoplasm</location>
    </subcellularLocation>
    <text evidence="1">Localizes to the cytoplasm during mitosis following nuclear envelope breakdown at this distinct stage of the cell cycle which allows its interaction with MAP3K3 kinase.</text>
</comment>
<comment type="domain">
    <text evidence="1">The C-terminal sequences affect heptamer stability and proteasome affinity.</text>
</comment>
<comment type="PTM">
    <text evidence="2 3">Phosphorylated by MAP3K3. Phosphorylation at Ser-247 promotes its association with CCAR2.</text>
</comment>
<comment type="PTM">
    <text evidence="1">Acetylation at the major site Lys-195 is important for oligomerization and ability to degrade its target substrates. Deacetylated by SIRT1 (By similarity).</text>
</comment>
<comment type="similarity">
    <text evidence="4">Belongs to the PA28 family.</text>
</comment>
<evidence type="ECO:0000250" key="1"/>
<evidence type="ECO:0000250" key="2">
    <source>
        <dbReference type="UniProtKB" id="P61289"/>
    </source>
</evidence>
<evidence type="ECO:0000250" key="3">
    <source>
        <dbReference type="UniProtKB" id="P61290"/>
    </source>
</evidence>
<evidence type="ECO:0000305" key="4"/>